<dbReference type="EMBL" id="AE015451">
    <property type="protein sequence ID" value="AAN66307.1"/>
    <property type="molecule type" value="Genomic_DNA"/>
</dbReference>
<dbReference type="RefSeq" id="NP_742843.1">
    <property type="nucleotide sequence ID" value="NC_002947.4"/>
</dbReference>
<dbReference type="RefSeq" id="WP_003247486.1">
    <property type="nucleotide sequence ID" value="NZ_CP169744.1"/>
</dbReference>
<dbReference type="STRING" id="160488.PP_0682"/>
<dbReference type="PaxDb" id="160488-PP_0682"/>
<dbReference type="KEGG" id="ppu:PP_0682"/>
<dbReference type="PATRIC" id="fig|160488.4.peg.730"/>
<dbReference type="eggNOG" id="COG2862">
    <property type="taxonomic scope" value="Bacteria"/>
</dbReference>
<dbReference type="HOGENOM" id="CLU_097887_1_1_6"/>
<dbReference type="OrthoDB" id="9783569at2"/>
<dbReference type="PhylomeDB" id="Q88Q16"/>
<dbReference type="BioCyc" id="PPUT160488:G1G01-754-MONOMER"/>
<dbReference type="Proteomes" id="UP000000556">
    <property type="component" value="Chromosome"/>
</dbReference>
<dbReference type="GO" id="GO:0005886">
    <property type="term" value="C:plasma membrane"/>
    <property type="evidence" value="ECO:0007669"/>
    <property type="project" value="UniProtKB-SubCell"/>
</dbReference>
<dbReference type="HAMAP" id="MF_00143">
    <property type="entry name" value="UPF0114"/>
    <property type="match status" value="1"/>
</dbReference>
<dbReference type="InterPro" id="IPR005134">
    <property type="entry name" value="UPF0114"/>
</dbReference>
<dbReference type="InterPro" id="IPR020761">
    <property type="entry name" value="UPF0114_bac"/>
</dbReference>
<dbReference type="NCBIfam" id="TIGR00645">
    <property type="entry name" value="HI0507"/>
    <property type="match status" value="1"/>
</dbReference>
<dbReference type="PANTHER" id="PTHR38596">
    <property type="entry name" value="UPF0114 PROTEIN YQHA"/>
    <property type="match status" value="1"/>
</dbReference>
<dbReference type="PANTHER" id="PTHR38596:SF1">
    <property type="entry name" value="UPF0114 PROTEIN YQHA"/>
    <property type="match status" value="1"/>
</dbReference>
<dbReference type="Pfam" id="PF03350">
    <property type="entry name" value="UPF0114"/>
    <property type="match status" value="1"/>
</dbReference>
<accession>Q88Q16</accession>
<sequence>MERILENAMYASRWLLAPIYFGLSLGLLALALKFFQEVVHVLPNVFALSEADLILVILSLIDMSLVGGLLVMVMISGYENFVSQLDIDESKEKLNWLGKMDSSSLKMKVAASIVAISSIHLLRVFMDAQNISTDYLMWYVIIHMTFVVSAFCMGYLDKLTKH</sequence>
<organism>
    <name type="scientific">Pseudomonas putida (strain ATCC 47054 / DSM 6125 / CFBP 8728 / NCIMB 11950 / KT2440)</name>
    <dbReference type="NCBI Taxonomy" id="160488"/>
    <lineage>
        <taxon>Bacteria</taxon>
        <taxon>Pseudomonadati</taxon>
        <taxon>Pseudomonadota</taxon>
        <taxon>Gammaproteobacteria</taxon>
        <taxon>Pseudomonadales</taxon>
        <taxon>Pseudomonadaceae</taxon>
        <taxon>Pseudomonas</taxon>
    </lineage>
</organism>
<evidence type="ECO:0000255" key="1">
    <source>
        <dbReference type="HAMAP-Rule" id="MF_00143"/>
    </source>
</evidence>
<name>Y682_PSEPK</name>
<protein>
    <recommendedName>
        <fullName evidence="1">UPF0114 protein PP_0682</fullName>
    </recommendedName>
</protein>
<gene>
    <name type="ordered locus">PP_0682</name>
</gene>
<proteinExistence type="inferred from homology"/>
<reference key="1">
    <citation type="journal article" date="2002" name="Environ. Microbiol.">
        <title>Complete genome sequence and comparative analysis of the metabolically versatile Pseudomonas putida KT2440.</title>
        <authorList>
            <person name="Nelson K.E."/>
            <person name="Weinel C."/>
            <person name="Paulsen I.T."/>
            <person name="Dodson R.J."/>
            <person name="Hilbert H."/>
            <person name="Martins dos Santos V.A.P."/>
            <person name="Fouts D.E."/>
            <person name="Gill S.R."/>
            <person name="Pop M."/>
            <person name="Holmes M."/>
            <person name="Brinkac L.M."/>
            <person name="Beanan M.J."/>
            <person name="DeBoy R.T."/>
            <person name="Daugherty S.C."/>
            <person name="Kolonay J.F."/>
            <person name="Madupu R."/>
            <person name="Nelson W.C."/>
            <person name="White O."/>
            <person name="Peterson J.D."/>
            <person name="Khouri H.M."/>
            <person name="Hance I."/>
            <person name="Chris Lee P."/>
            <person name="Holtzapple E.K."/>
            <person name="Scanlan D."/>
            <person name="Tran K."/>
            <person name="Moazzez A."/>
            <person name="Utterback T.R."/>
            <person name="Rizzo M."/>
            <person name="Lee K."/>
            <person name="Kosack D."/>
            <person name="Moestl D."/>
            <person name="Wedler H."/>
            <person name="Lauber J."/>
            <person name="Stjepandic D."/>
            <person name="Hoheisel J."/>
            <person name="Straetz M."/>
            <person name="Heim S."/>
            <person name="Kiewitz C."/>
            <person name="Eisen J.A."/>
            <person name="Timmis K.N."/>
            <person name="Duesterhoeft A."/>
            <person name="Tuemmler B."/>
            <person name="Fraser C.M."/>
        </authorList>
    </citation>
    <scope>NUCLEOTIDE SEQUENCE [LARGE SCALE GENOMIC DNA]</scope>
    <source>
        <strain>ATCC 47054 / DSM 6125 / CFBP 8728 / NCIMB 11950 / KT2440</strain>
    </source>
</reference>
<comment type="subcellular location">
    <subcellularLocation>
        <location evidence="1">Cell membrane</location>
        <topology evidence="1">Multi-pass membrane protein</topology>
    </subcellularLocation>
</comment>
<comment type="similarity">
    <text evidence="1">Belongs to the UPF0114 family.</text>
</comment>
<keyword id="KW-1003">Cell membrane</keyword>
<keyword id="KW-0472">Membrane</keyword>
<keyword id="KW-1185">Reference proteome</keyword>
<keyword id="KW-0812">Transmembrane</keyword>
<keyword id="KW-1133">Transmembrane helix</keyword>
<feature type="chain" id="PRO_0000214375" description="UPF0114 protein PP_0682">
    <location>
        <begin position="1"/>
        <end position="162"/>
    </location>
</feature>
<feature type="transmembrane region" description="Helical" evidence="1">
    <location>
        <begin position="10"/>
        <end position="32"/>
    </location>
</feature>
<feature type="transmembrane region" description="Helical" evidence="1">
    <location>
        <begin position="53"/>
        <end position="75"/>
    </location>
</feature>
<feature type="transmembrane region" description="Helical" evidence="1">
    <location>
        <begin position="109"/>
        <end position="126"/>
    </location>
</feature>
<feature type="transmembrane region" description="Helical" evidence="1">
    <location>
        <begin position="135"/>
        <end position="157"/>
    </location>
</feature>